<name>CH60_CAMFF</name>
<reference key="1">
    <citation type="submission" date="2006-11" db="EMBL/GenBank/DDBJ databases">
        <title>Sequence of Campylobacter fetus subsp. fetus 82-40.</title>
        <authorList>
            <person name="Fouts D.E."/>
            <person name="Nelson K.E."/>
        </authorList>
    </citation>
    <scope>NUCLEOTIDE SEQUENCE [LARGE SCALE GENOMIC DNA]</scope>
    <source>
        <strain>82-40</strain>
    </source>
</reference>
<gene>
    <name evidence="1" type="primary">groEL</name>
    <name evidence="1" type="synonym">groL</name>
    <name type="ordered locus">CFF8240_0701</name>
</gene>
<evidence type="ECO:0000255" key="1">
    <source>
        <dbReference type="HAMAP-Rule" id="MF_00600"/>
    </source>
</evidence>
<organism>
    <name type="scientific">Campylobacter fetus subsp. fetus (strain 82-40)</name>
    <dbReference type="NCBI Taxonomy" id="360106"/>
    <lineage>
        <taxon>Bacteria</taxon>
        <taxon>Pseudomonadati</taxon>
        <taxon>Campylobacterota</taxon>
        <taxon>Epsilonproteobacteria</taxon>
        <taxon>Campylobacterales</taxon>
        <taxon>Campylobacteraceae</taxon>
        <taxon>Campylobacter</taxon>
    </lineage>
</organism>
<keyword id="KW-0067">ATP-binding</keyword>
<keyword id="KW-0143">Chaperone</keyword>
<keyword id="KW-0963">Cytoplasm</keyword>
<keyword id="KW-0413">Isomerase</keyword>
<keyword id="KW-0547">Nucleotide-binding</keyword>
<feature type="chain" id="PRO_1000025764" description="Chaperonin GroEL">
    <location>
        <begin position="1"/>
        <end position="545"/>
    </location>
</feature>
<feature type="binding site" evidence="1">
    <location>
        <begin position="29"/>
        <end position="32"/>
    </location>
    <ligand>
        <name>ATP</name>
        <dbReference type="ChEBI" id="CHEBI:30616"/>
    </ligand>
</feature>
<feature type="binding site" evidence="1">
    <location>
        <position position="50"/>
    </location>
    <ligand>
        <name>ATP</name>
        <dbReference type="ChEBI" id="CHEBI:30616"/>
    </ligand>
</feature>
<feature type="binding site" evidence="1">
    <location>
        <begin position="86"/>
        <end position="90"/>
    </location>
    <ligand>
        <name>ATP</name>
        <dbReference type="ChEBI" id="CHEBI:30616"/>
    </ligand>
</feature>
<feature type="binding site" evidence="1">
    <location>
        <position position="414"/>
    </location>
    <ligand>
        <name>ATP</name>
        <dbReference type="ChEBI" id="CHEBI:30616"/>
    </ligand>
</feature>
<feature type="binding site" evidence="1">
    <location>
        <begin position="477"/>
        <end position="479"/>
    </location>
    <ligand>
        <name>ATP</name>
        <dbReference type="ChEBI" id="CHEBI:30616"/>
    </ligand>
</feature>
<feature type="binding site" evidence="1">
    <location>
        <position position="493"/>
    </location>
    <ligand>
        <name>ATP</name>
        <dbReference type="ChEBI" id="CHEBI:30616"/>
    </ligand>
</feature>
<comment type="function">
    <text evidence="1">Together with its co-chaperonin GroES, plays an essential role in assisting protein folding. The GroEL-GroES system forms a nano-cage that allows encapsulation of the non-native substrate proteins and provides a physical environment optimized to promote and accelerate protein folding.</text>
</comment>
<comment type="catalytic activity">
    <reaction evidence="1">
        <text>ATP + H2O + a folded polypeptide = ADP + phosphate + an unfolded polypeptide.</text>
        <dbReference type="EC" id="5.6.1.7"/>
    </reaction>
</comment>
<comment type="subunit">
    <text evidence="1">Forms a cylinder of 14 subunits composed of two heptameric rings stacked back-to-back. Interacts with the co-chaperonin GroES.</text>
</comment>
<comment type="subcellular location">
    <subcellularLocation>
        <location evidence="1">Cytoplasm</location>
    </subcellularLocation>
</comment>
<comment type="similarity">
    <text evidence="1">Belongs to the chaperonin (HSP60) family.</text>
</comment>
<proteinExistence type="inferred from homology"/>
<accession>A0RNU3</accession>
<sequence>MAKEIIFADDARNRLYSGVKKLNDAVKVTMGPRGRNVLIQKSFGAPSITKDGVSVAKEIELKDTIENMGAGLVREVASKTNDEAGDGTTTATVLAHAIFKEGLRNITAGANPIEVKRGMDKFVEAVTSELKSAAKKVDGKKEIAQVATISANSDSSIGDLIAEAMEKVGKDGVITVEEAKSINDELNVVEGMQFDRGYLSPYFITNAEKMQVELSSPFILLFDKKITNLKDLLPVLEQIQKTGKPLLIVAEDIEGEALATLVVNKLRGVLNISAVKAPGFGDRRKAMLEDIAILTGGEVISEELGRTLESASLQDLGQADRVVIDKDNTTIVNGAGDKDSIEARINQIKAQIAETTSDYDKEKLQERLAKLSGGVAVIKVGAATETEMKEKKDRVDDALNATKAAVEEGIVVGGGAALIKAGNRVNLSLKGDELIGAEIVKRALFAPLRQIAENAGFDAGVVANSVSCADCPNYGFNAASGEYVDMFEAGIIDPVKVERIALQNAVSVASLLLTTEATVSEIKEDKPAMPPMPDMGGMGGMGGMM</sequence>
<dbReference type="EC" id="5.6.1.7" evidence="1"/>
<dbReference type="EMBL" id="CP000487">
    <property type="protein sequence ID" value="ABK82139.1"/>
    <property type="molecule type" value="Genomic_DNA"/>
</dbReference>
<dbReference type="RefSeq" id="WP_011731919.1">
    <property type="nucleotide sequence ID" value="NC_008599.1"/>
</dbReference>
<dbReference type="SMR" id="A0RNU3"/>
<dbReference type="GeneID" id="61064541"/>
<dbReference type="KEGG" id="cff:CFF8240_0701"/>
<dbReference type="eggNOG" id="COG0459">
    <property type="taxonomic scope" value="Bacteria"/>
</dbReference>
<dbReference type="HOGENOM" id="CLU_016503_3_0_7"/>
<dbReference type="Proteomes" id="UP000000760">
    <property type="component" value="Chromosome"/>
</dbReference>
<dbReference type="GO" id="GO:0005737">
    <property type="term" value="C:cytoplasm"/>
    <property type="evidence" value="ECO:0007669"/>
    <property type="project" value="UniProtKB-SubCell"/>
</dbReference>
<dbReference type="GO" id="GO:0005524">
    <property type="term" value="F:ATP binding"/>
    <property type="evidence" value="ECO:0007669"/>
    <property type="project" value="UniProtKB-UniRule"/>
</dbReference>
<dbReference type="GO" id="GO:0140662">
    <property type="term" value="F:ATP-dependent protein folding chaperone"/>
    <property type="evidence" value="ECO:0007669"/>
    <property type="project" value="InterPro"/>
</dbReference>
<dbReference type="GO" id="GO:0016853">
    <property type="term" value="F:isomerase activity"/>
    <property type="evidence" value="ECO:0007669"/>
    <property type="project" value="UniProtKB-KW"/>
</dbReference>
<dbReference type="GO" id="GO:0051082">
    <property type="term" value="F:unfolded protein binding"/>
    <property type="evidence" value="ECO:0007669"/>
    <property type="project" value="UniProtKB-UniRule"/>
</dbReference>
<dbReference type="GO" id="GO:0042026">
    <property type="term" value="P:protein refolding"/>
    <property type="evidence" value="ECO:0007669"/>
    <property type="project" value="UniProtKB-UniRule"/>
</dbReference>
<dbReference type="CDD" id="cd03344">
    <property type="entry name" value="GroEL"/>
    <property type="match status" value="1"/>
</dbReference>
<dbReference type="FunFam" id="3.50.7.10:FF:000001">
    <property type="entry name" value="60 kDa chaperonin"/>
    <property type="match status" value="1"/>
</dbReference>
<dbReference type="Gene3D" id="3.50.7.10">
    <property type="entry name" value="GroEL"/>
    <property type="match status" value="1"/>
</dbReference>
<dbReference type="Gene3D" id="1.10.560.10">
    <property type="entry name" value="GroEL-like equatorial domain"/>
    <property type="match status" value="1"/>
</dbReference>
<dbReference type="Gene3D" id="3.30.260.10">
    <property type="entry name" value="TCP-1-like chaperonin intermediate domain"/>
    <property type="match status" value="1"/>
</dbReference>
<dbReference type="HAMAP" id="MF_00600">
    <property type="entry name" value="CH60"/>
    <property type="match status" value="1"/>
</dbReference>
<dbReference type="InterPro" id="IPR018370">
    <property type="entry name" value="Chaperonin_Cpn60_CS"/>
</dbReference>
<dbReference type="InterPro" id="IPR001844">
    <property type="entry name" value="Cpn60/GroEL"/>
</dbReference>
<dbReference type="InterPro" id="IPR002423">
    <property type="entry name" value="Cpn60/GroEL/TCP-1"/>
</dbReference>
<dbReference type="InterPro" id="IPR027409">
    <property type="entry name" value="GroEL-like_apical_dom_sf"/>
</dbReference>
<dbReference type="InterPro" id="IPR027413">
    <property type="entry name" value="GROEL-like_equatorial_sf"/>
</dbReference>
<dbReference type="InterPro" id="IPR027410">
    <property type="entry name" value="TCP-1-like_intermed_sf"/>
</dbReference>
<dbReference type="NCBIfam" id="TIGR02348">
    <property type="entry name" value="GroEL"/>
    <property type="match status" value="1"/>
</dbReference>
<dbReference type="NCBIfam" id="NF000592">
    <property type="entry name" value="PRK00013.1"/>
    <property type="match status" value="1"/>
</dbReference>
<dbReference type="NCBIfam" id="NF009487">
    <property type="entry name" value="PRK12849.1"/>
    <property type="match status" value="1"/>
</dbReference>
<dbReference type="NCBIfam" id="NF009488">
    <property type="entry name" value="PRK12850.1"/>
    <property type="match status" value="1"/>
</dbReference>
<dbReference type="NCBIfam" id="NF009489">
    <property type="entry name" value="PRK12851.1"/>
    <property type="match status" value="1"/>
</dbReference>
<dbReference type="PANTHER" id="PTHR45633">
    <property type="entry name" value="60 KDA HEAT SHOCK PROTEIN, MITOCHONDRIAL"/>
    <property type="match status" value="1"/>
</dbReference>
<dbReference type="Pfam" id="PF00118">
    <property type="entry name" value="Cpn60_TCP1"/>
    <property type="match status" value="1"/>
</dbReference>
<dbReference type="PRINTS" id="PR00298">
    <property type="entry name" value="CHAPERONIN60"/>
</dbReference>
<dbReference type="SUPFAM" id="SSF52029">
    <property type="entry name" value="GroEL apical domain-like"/>
    <property type="match status" value="1"/>
</dbReference>
<dbReference type="SUPFAM" id="SSF48592">
    <property type="entry name" value="GroEL equatorial domain-like"/>
    <property type="match status" value="1"/>
</dbReference>
<dbReference type="SUPFAM" id="SSF54849">
    <property type="entry name" value="GroEL-intermediate domain like"/>
    <property type="match status" value="1"/>
</dbReference>
<dbReference type="PROSITE" id="PS00296">
    <property type="entry name" value="CHAPERONINS_CPN60"/>
    <property type="match status" value="1"/>
</dbReference>
<protein>
    <recommendedName>
        <fullName evidence="1">Chaperonin GroEL</fullName>
        <ecNumber evidence="1">5.6.1.7</ecNumber>
    </recommendedName>
    <alternativeName>
        <fullName evidence="1">60 kDa chaperonin</fullName>
    </alternativeName>
    <alternativeName>
        <fullName evidence="1">Chaperonin-60</fullName>
        <shortName evidence="1">Cpn60</shortName>
    </alternativeName>
</protein>